<keyword id="KW-0997">Cell inner membrane</keyword>
<keyword id="KW-1003">Cell membrane</keyword>
<keyword id="KW-0472">Membrane</keyword>
<keyword id="KW-0812">Transmembrane</keyword>
<keyword id="KW-1133">Transmembrane helix</keyword>
<sequence length="47" mass="5520">MKKFRWVVLGIVVVVCLLLWAQVFNIMCDQDVQFFSGICAINKFIPW</sequence>
<proteinExistence type="inferred from homology"/>
<evidence type="ECO:0000255" key="1">
    <source>
        <dbReference type="HAMAP-Rule" id="MF_01596"/>
    </source>
</evidence>
<name>MGRB_SALPK</name>
<gene>
    <name evidence="1" type="primary">mgrB</name>
    <name type="ordered locus">SSPA0963</name>
</gene>
<dbReference type="EMBL" id="FM200053">
    <property type="protein sequence ID" value="CAR59114.1"/>
    <property type="molecule type" value="Genomic_DNA"/>
</dbReference>
<dbReference type="RefSeq" id="WP_000714547.1">
    <property type="nucleotide sequence ID" value="NC_011147.1"/>
</dbReference>
<dbReference type="GeneID" id="66756315"/>
<dbReference type="KEGG" id="sek:SSPA0963"/>
<dbReference type="HOGENOM" id="CLU_208030_1_0_6"/>
<dbReference type="Proteomes" id="UP000001869">
    <property type="component" value="Chromosome"/>
</dbReference>
<dbReference type="GO" id="GO:0005886">
    <property type="term" value="C:plasma membrane"/>
    <property type="evidence" value="ECO:0007669"/>
    <property type="project" value="UniProtKB-SubCell"/>
</dbReference>
<dbReference type="GO" id="GO:0070298">
    <property type="term" value="P:negative regulation of phosphorelay signal transduction system"/>
    <property type="evidence" value="ECO:0007669"/>
    <property type="project" value="UniProtKB-UniRule"/>
</dbReference>
<dbReference type="HAMAP" id="MF_01596">
    <property type="entry name" value="MgrB"/>
    <property type="match status" value="1"/>
</dbReference>
<dbReference type="InterPro" id="IPR020907">
    <property type="entry name" value="MgrB"/>
</dbReference>
<dbReference type="NCBIfam" id="NF007635">
    <property type="entry name" value="PRK10299.1"/>
    <property type="match status" value="1"/>
</dbReference>
<dbReference type="Pfam" id="PF13998">
    <property type="entry name" value="MgrB"/>
    <property type="match status" value="1"/>
</dbReference>
<accession>B5BHB6</accession>
<organism>
    <name type="scientific">Salmonella paratyphi A (strain AKU_12601)</name>
    <dbReference type="NCBI Taxonomy" id="554290"/>
    <lineage>
        <taxon>Bacteria</taxon>
        <taxon>Pseudomonadati</taxon>
        <taxon>Pseudomonadota</taxon>
        <taxon>Gammaproteobacteria</taxon>
        <taxon>Enterobacterales</taxon>
        <taxon>Enterobacteriaceae</taxon>
        <taxon>Salmonella</taxon>
    </lineage>
</organism>
<protein>
    <recommendedName>
        <fullName evidence="1">PhoP/PhoQ regulator MgrB</fullName>
    </recommendedName>
</protein>
<feature type="chain" id="PRO_1000201575" description="PhoP/PhoQ regulator MgrB">
    <location>
        <begin position="1"/>
        <end position="47"/>
    </location>
</feature>
<feature type="transmembrane region" description="Helical" evidence="1">
    <location>
        <begin position="6"/>
        <end position="26"/>
    </location>
</feature>
<reference key="1">
    <citation type="journal article" date="2009" name="BMC Genomics">
        <title>Pseudogene accumulation in the evolutionary histories of Salmonella enterica serovars Paratyphi A and Typhi.</title>
        <authorList>
            <person name="Holt K.E."/>
            <person name="Thomson N.R."/>
            <person name="Wain J."/>
            <person name="Langridge G.C."/>
            <person name="Hasan R."/>
            <person name="Bhutta Z.A."/>
            <person name="Quail M.A."/>
            <person name="Norbertczak H."/>
            <person name="Walker D."/>
            <person name="Simmonds M."/>
            <person name="White B."/>
            <person name="Bason N."/>
            <person name="Mungall K."/>
            <person name="Dougan G."/>
            <person name="Parkhill J."/>
        </authorList>
    </citation>
    <scope>NUCLEOTIDE SEQUENCE [LARGE SCALE GENOMIC DNA]</scope>
    <source>
        <strain>AKU_12601</strain>
    </source>
</reference>
<comment type="function">
    <text evidence="1">PhoP-regulated transcription is redox-sensitive, being activated when the periplasm becomes more reducing. MgrB acts between DsbA/DsbB and PhoP/PhoQ in this pathway. Represses PhoP/PhoQ signaling, possibly by binding to the periplasmic domain of PhoQ, altering its activity and that of downstream effector PhoP.</text>
</comment>
<comment type="subunit">
    <text evidence="1">May form homooligomers. Probably interacts with the periplasmic domain of PhoQ.</text>
</comment>
<comment type="subcellular location">
    <subcellularLocation>
        <location evidence="1">Cell inner membrane</location>
        <topology evidence="1">Single-pass membrane protein</topology>
    </subcellularLocation>
</comment>
<comment type="similarity">
    <text evidence="1">Belongs to the MgrB family.</text>
</comment>